<protein>
    <recommendedName>
        <fullName evidence="1">3-hydroxyacyl-[acyl-carrier-protein] dehydratase FabZ</fullName>
        <ecNumber evidence="1">4.2.1.59</ecNumber>
    </recommendedName>
    <alternativeName>
        <fullName evidence="1">(3R)-hydroxymyristoyl-[acyl-carrier-protein] dehydratase</fullName>
        <shortName evidence="1">(3R)-hydroxymyristoyl-ACP dehydrase</shortName>
    </alternativeName>
    <alternativeName>
        <fullName evidence="1">Beta-hydroxyacyl-ACP dehydratase</fullName>
    </alternativeName>
</protein>
<reference key="1">
    <citation type="journal article" date="2007" name="Genes Dev.">
        <title>New insights into Acinetobacter baumannii pathogenesis revealed by high-density pyrosequencing and transposon mutagenesis.</title>
        <authorList>
            <person name="Smith M.G."/>
            <person name="Gianoulis T.A."/>
            <person name="Pukatzki S."/>
            <person name="Mekalanos J.J."/>
            <person name="Ornston L.N."/>
            <person name="Gerstein M."/>
            <person name="Snyder M."/>
        </authorList>
    </citation>
    <scope>NUCLEOTIDE SEQUENCE [LARGE SCALE GENOMIC DNA]</scope>
    <source>
        <strain>ATCC 17978 / DSM 105126 / CIP 53.77 / LMG 1025 / NCDC KC755 / 5377</strain>
    </source>
</reference>
<feature type="chain" id="PRO_0000340753" description="3-hydroxyacyl-[acyl-carrier-protein] dehydratase FabZ">
    <location>
        <begin position="1"/>
        <end position="146"/>
    </location>
</feature>
<feature type="active site" evidence="1">
    <location>
        <position position="46"/>
    </location>
</feature>
<evidence type="ECO:0000255" key="1">
    <source>
        <dbReference type="HAMAP-Rule" id="MF_00406"/>
    </source>
</evidence>
<evidence type="ECO:0000305" key="2"/>
<keyword id="KW-0963">Cytoplasm</keyword>
<keyword id="KW-0441">Lipid A biosynthesis</keyword>
<keyword id="KW-0444">Lipid biosynthesis</keyword>
<keyword id="KW-0443">Lipid metabolism</keyword>
<keyword id="KW-0456">Lyase</keyword>
<accession>A3M649</accession>
<sequence length="146" mass="16345">MQIQTIRQYLPHRYPFLLVDRVTEVTDNSIVGYKNVSINEEFLQGHFPEYPIMPGVLIVEALAQVSGVLGFIMNNETPKPGSLFLFAGAERVRFKKQVVAGDQLVLKSELVMQKRGIYKYNCTASVDGIVAATAEIMISHQKTEQA</sequence>
<dbReference type="EC" id="4.2.1.59" evidence="1"/>
<dbReference type="EMBL" id="CP000521">
    <property type="protein sequence ID" value="ABO12393.2"/>
    <property type="status" value="ALT_INIT"/>
    <property type="molecule type" value="Genomic_DNA"/>
</dbReference>
<dbReference type="SMR" id="A3M649"/>
<dbReference type="KEGG" id="acb:A1S_1966"/>
<dbReference type="HOGENOM" id="CLU_078912_1_2_6"/>
<dbReference type="GO" id="GO:0005737">
    <property type="term" value="C:cytoplasm"/>
    <property type="evidence" value="ECO:0007669"/>
    <property type="project" value="UniProtKB-SubCell"/>
</dbReference>
<dbReference type="GO" id="GO:0016020">
    <property type="term" value="C:membrane"/>
    <property type="evidence" value="ECO:0007669"/>
    <property type="project" value="GOC"/>
</dbReference>
<dbReference type="GO" id="GO:0019171">
    <property type="term" value="F:(3R)-hydroxyacyl-[acyl-carrier-protein] dehydratase activity"/>
    <property type="evidence" value="ECO:0007669"/>
    <property type="project" value="UniProtKB-EC"/>
</dbReference>
<dbReference type="GO" id="GO:0006633">
    <property type="term" value="P:fatty acid biosynthetic process"/>
    <property type="evidence" value="ECO:0007669"/>
    <property type="project" value="UniProtKB-UniRule"/>
</dbReference>
<dbReference type="GO" id="GO:0009245">
    <property type="term" value="P:lipid A biosynthetic process"/>
    <property type="evidence" value="ECO:0007669"/>
    <property type="project" value="UniProtKB-UniRule"/>
</dbReference>
<dbReference type="CDD" id="cd01288">
    <property type="entry name" value="FabZ"/>
    <property type="match status" value="1"/>
</dbReference>
<dbReference type="FunFam" id="3.10.129.10:FF:000001">
    <property type="entry name" value="3-hydroxyacyl-[acyl-carrier-protein] dehydratase FabZ"/>
    <property type="match status" value="1"/>
</dbReference>
<dbReference type="Gene3D" id="3.10.129.10">
    <property type="entry name" value="Hotdog Thioesterase"/>
    <property type="match status" value="1"/>
</dbReference>
<dbReference type="HAMAP" id="MF_00406">
    <property type="entry name" value="FabZ"/>
    <property type="match status" value="1"/>
</dbReference>
<dbReference type="InterPro" id="IPR013114">
    <property type="entry name" value="FabA_FabZ"/>
</dbReference>
<dbReference type="InterPro" id="IPR010084">
    <property type="entry name" value="FabZ"/>
</dbReference>
<dbReference type="InterPro" id="IPR029069">
    <property type="entry name" value="HotDog_dom_sf"/>
</dbReference>
<dbReference type="NCBIfam" id="TIGR01750">
    <property type="entry name" value="fabZ"/>
    <property type="match status" value="1"/>
</dbReference>
<dbReference type="NCBIfam" id="NF000582">
    <property type="entry name" value="PRK00006.1"/>
    <property type="match status" value="1"/>
</dbReference>
<dbReference type="PANTHER" id="PTHR30272">
    <property type="entry name" value="3-HYDROXYACYL-[ACYL-CARRIER-PROTEIN] DEHYDRATASE"/>
    <property type="match status" value="1"/>
</dbReference>
<dbReference type="PANTHER" id="PTHR30272:SF1">
    <property type="entry name" value="3-HYDROXYACYL-[ACYL-CARRIER-PROTEIN] DEHYDRATASE"/>
    <property type="match status" value="1"/>
</dbReference>
<dbReference type="Pfam" id="PF07977">
    <property type="entry name" value="FabA"/>
    <property type="match status" value="1"/>
</dbReference>
<dbReference type="SUPFAM" id="SSF54637">
    <property type="entry name" value="Thioesterase/thiol ester dehydrase-isomerase"/>
    <property type="match status" value="1"/>
</dbReference>
<name>FABZ_ACIBT</name>
<comment type="function">
    <text evidence="1">Involved in unsaturated fatty acids biosynthesis. Catalyzes the dehydration of short chain beta-hydroxyacyl-ACPs and long chain saturated and unsaturated beta-hydroxyacyl-ACPs.</text>
</comment>
<comment type="catalytic activity">
    <reaction evidence="1">
        <text>a (3R)-hydroxyacyl-[ACP] = a (2E)-enoyl-[ACP] + H2O</text>
        <dbReference type="Rhea" id="RHEA:13097"/>
        <dbReference type="Rhea" id="RHEA-COMP:9925"/>
        <dbReference type="Rhea" id="RHEA-COMP:9945"/>
        <dbReference type="ChEBI" id="CHEBI:15377"/>
        <dbReference type="ChEBI" id="CHEBI:78784"/>
        <dbReference type="ChEBI" id="CHEBI:78827"/>
        <dbReference type="EC" id="4.2.1.59"/>
    </reaction>
</comment>
<comment type="subcellular location">
    <subcellularLocation>
        <location evidence="1">Cytoplasm</location>
    </subcellularLocation>
</comment>
<comment type="similarity">
    <text evidence="1">Belongs to the thioester dehydratase family. FabZ subfamily.</text>
</comment>
<comment type="sequence caution" evidence="2">
    <conflict type="erroneous initiation">
        <sequence resource="EMBL-CDS" id="ABO12393"/>
    </conflict>
</comment>
<gene>
    <name evidence="1" type="primary">fabZ</name>
    <name type="ordered locus">A1S_1966</name>
</gene>
<organism>
    <name type="scientific">Acinetobacter baumannii (strain ATCC 17978 / DSM 105126 / CIP 53.77 / LMG 1025 / NCDC KC755 / 5377)</name>
    <dbReference type="NCBI Taxonomy" id="400667"/>
    <lineage>
        <taxon>Bacteria</taxon>
        <taxon>Pseudomonadati</taxon>
        <taxon>Pseudomonadota</taxon>
        <taxon>Gammaproteobacteria</taxon>
        <taxon>Moraxellales</taxon>
        <taxon>Moraxellaceae</taxon>
        <taxon>Acinetobacter</taxon>
        <taxon>Acinetobacter calcoaceticus/baumannii complex</taxon>
    </lineage>
</organism>
<proteinExistence type="inferred from homology"/>